<feature type="signal peptide" evidence="2">
    <location>
        <begin position="1"/>
        <end position="26"/>
    </location>
</feature>
<feature type="chain" id="PRO_0000022060" description="3-phytase">
    <location>
        <begin position="27"/>
        <end position="382"/>
    </location>
</feature>
<feature type="domain" description="BPP" evidence="3">
    <location>
        <begin position="27"/>
        <end position="361"/>
    </location>
</feature>
<reference key="1">
    <citation type="journal article" date="1998" name="DNA Res.">
        <title>Sequence analysis of the Bacillus subtilis 168 chromosome region between the sspC and odhA loci (184 degrees-180 degrees).</title>
        <authorList>
            <person name="Ghim S.-Y."/>
            <person name="Choi S.-K."/>
            <person name="Shin B.-S."/>
            <person name="Jeong Y.-M."/>
            <person name="Sorokin A."/>
            <person name="Ehrlich S.D."/>
            <person name="Park S.-H."/>
        </authorList>
    </citation>
    <scope>NUCLEOTIDE SEQUENCE [GENOMIC DNA]</scope>
    <source>
        <strain>168</strain>
    </source>
</reference>
<reference key="2">
    <citation type="journal article" date="1997" name="Nature">
        <title>The complete genome sequence of the Gram-positive bacterium Bacillus subtilis.</title>
        <authorList>
            <person name="Kunst F."/>
            <person name="Ogasawara N."/>
            <person name="Moszer I."/>
            <person name="Albertini A.M."/>
            <person name="Alloni G."/>
            <person name="Azevedo V."/>
            <person name="Bertero M.G."/>
            <person name="Bessieres P."/>
            <person name="Bolotin A."/>
            <person name="Borchert S."/>
            <person name="Borriss R."/>
            <person name="Boursier L."/>
            <person name="Brans A."/>
            <person name="Braun M."/>
            <person name="Brignell S.C."/>
            <person name="Bron S."/>
            <person name="Brouillet S."/>
            <person name="Bruschi C.V."/>
            <person name="Caldwell B."/>
            <person name="Capuano V."/>
            <person name="Carter N.M."/>
            <person name="Choi S.-K."/>
            <person name="Codani J.-J."/>
            <person name="Connerton I.F."/>
            <person name="Cummings N.J."/>
            <person name="Daniel R.A."/>
            <person name="Denizot F."/>
            <person name="Devine K.M."/>
            <person name="Duesterhoeft A."/>
            <person name="Ehrlich S.D."/>
            <person name="Emmerson P.T."/>
            <person name="Entian K.-D."/>
            <person name="Errington J."/>
            <person name="Fabret C."/>
            <person name="Ferrari E."/>
            <person name="Foulger D."/>
            <person name="Fritz C."/>
            <person name="Fujita M."/>
            <person name="Fujita Y."/>
            <person name="Fuma S."/>
            <person name="Galizzi A."/>
            <person name="Galleron N."/>
            <person name="Ghim S.-Y."/>
            <person name="Glaser P."/>
            <person name="Goffeau A."/>
            <person name="Golightly E.J."/>
            <person name="Grandi G."/>
            <person name="Guiseppi G."/>
            <person name="Guy B.J."/>
            <person name="Haga K."/>
            <person name="Haiech J."/>
            <person name="Harwood C.R."/>
            <person name="Henaut A."/>
            <person name="Hilbert H."/>
            <person name="Holsappel S."/>
            <person name="Hosono S."/>
            <person name="Hullo M.-F."/>
            <person name="Itaya M."/>
            <person name="Jones L.-M."/>
            <person name="Joris B."/>
            <person name="Karamata D."/>
            <person name="Kasahara Y."/>
            <person name="Klaerr-Blanchard M."/>
            <person name="Klein C."/>
            <person name="Kobayashi Y."/>
            <person name="Koetter P."/>
            <person name="Koningstein G."/>
            <person name="Krogh S."/>
            <person name="Kumano M."/>
            <person name="Kurita K."/>
            <person name="Lapidus A."/>
            <person name="Lardinois S."/>
            <person name="Lauber J."/>
            <person name="Lazarevic V."/>
            <person name="Lee S.-M."/>
            <person name="Levine A."/>
            <person name="Liu H."/>
            <person name="Masuda S."/>
            <person name="Mauel C."/>
            <person name="Medigue C."/>
            <person name="Medina N."/>
            <person name="Mellado R.P."/>
            <person name="Mizuno M."/>
            <person name="Moestl D."/>
            <person name="Nakai S."/>
            <person name="Noback M."/>
            <person name="Noone D."/>
            <person name="O'Reilly M."/>
            <person name="Ogawa K."/>
            <person name="Ogiwara A."/>
            <person name="Oudega B."/>
            <person name="Park S.-H."/>
            <person name="Parro V."/>
            <person name="Pohl T.M."/>
            <person name="Portetelle D."/>
            <person name="Porwollik S."/>
            <person name="Prescott A.M."/>
            <person name="Presecan E."/>
            <person name="Pujic P."/>
            <person name="Purnelle B."/>
            <person name="Rapoport G."/>
            <person name="Rey M."/>
            <person name="Reynolds S."/>
            <person name="Rieger M."/>
            <person name="Rivolta C."/>
            <person name="Rocha E."/>
            <person name="Roche B."/>
            <person name="Rose M."/>
            <person name="Sadaie Y."/>
            <person name="Sato T."/>
            <person name="Scanlan E."/>
            <person name="Schleich S."/>
            <person name="Schroeter R."/>
            <person name="Scoffone F."/>
            <person name="Sekiguchi J."/>
            <person name="Sekowska A."/>
            <person name="Seror S.J."/>
            <person name="Serror P."/>
            <person name="Shin B.-S."/>
            <person name="Soldo B."/>
            <person name="Sorokin A."/>
            <person name="Tacconi E."/>
            <person name="Takagi T."/>
            <person name="Takahashi H."/>
            <person name="Takemaru K."/>
            <person name="Takeuchi M."/>
            <person name="Tamakoshi A."/>
            <person name="Tanaka T."/>
            <person name="Terpstra P."/>
            <person name="Tognoni A."/>
            <person name="Tosato V."/>
            <person name="Uchiyama S."/>
            <person name="Vandenbol M."/>
            <person name="Vannier F."/>
            <person name="Vassarotti A."/>
            <person name="Viari A."/>
            <person name="Wambutt R."/>
            <person name="Wedler E."/>
            <person name="Wedler H."/>
            <person name="Weitzenegger T."/>
            <person name="Winters P."/>
            <person name="Wipat A."/>
            <person name="Yamamoto H."/>
            <person name="Yamane K."/>
            <person name="Yasumoto K."/>
            <person name="Yata K."/>
            <person name="Yoshida K."/>
            <person name="Yoshikawa H.-F."/>
            <person name="Zumstein E."/>
            <person name="Yoshikawa H."/>
            <person name="Danchin A."/>
        </authorList>
    </citation>
    <scope>NUCLEOTIDE SEQUENCE [LARGE SCALE GENOMIC DNA]</scope>
    <source>
        <strain>168</strain>
    </source>
</reference>
<reference key="3">
    <citation type="journal article" date="1995" name="J. Bacteriol.">
        <title>Adjacent and divergently oriented operons under the control of the sporulation regulatory protein GerE in Bacillus subtilis.</title>
        <authorList>
            <person name="Roels S."/>
            <person name="Losick R."/>
        </authorList>
    </citation>
    <scope>NUCLEOTIDE SEQUENCE [GENOMIC DNA] OF 206-382</scope>
    <source>
        <strain>168</strain>
    </source>
</reference>
<reference key="4">
    <citation type="book" date="2000" name="Proceedings of Genome 2000: international conference of microbial and model genomes">
        <title>Gene identification in bacterial genomes: isolation of phytase encoding genes in Bacillus subtilis and Clostridium acetobutylicum.</title>
        <authorList>
            <person name="Farouk A."/>
            <person name="Borriss R."/>
        </authorList>
    </citation>
    <scope>CHARACTERIZATION</scope>
</reference>
<proteinExistence type="evidence at protein level"/>
<accession>P42094</accession>
<comment type="catalytic activity">
    <reaction evidence="3">
        <text>1D-myo-inositol hexakisphosphate + H2O = 1D-myo-inositol 1,2,4,5,6-pentakisphosphate + phosphate</text>
        <dbReference type="Rhea" id="RHEA:16989"/>
        <dbReference type="ChEBI" id="CHEBI:15377"/>
        <dbReference type="ChEBI" id="CHEBI:43474"/>
        <dbReference type="ChEBI" id="CHEBI:57798"/>
        <dbReference type="ChEBI" id="CHEBI:58130"/>
        <dbReference type="EC" id="3.1.3.8"/>
    </reaction>
</comment>
<comment type="subcellular location">
    <subcellularLocation>
        <location evidence="1">Secreted</location>
    </subcellularLocation>
</comment>
<sequence length="382" mass="41946">MKVPKTMLLSTAAGLLLSLTATSVSAHYVNEEHHFKVTAHTETDPVASGDDAADDPAIWVHEKHPEKSKLITTNKKSGLVVYDLDGKQLHSYEFGKLNNVDLRYDFPLNGEKIDIAAASNRSEGKNTIEVYAIDGDKGKLKSITDPNHPISTNISEVYGFSLYHSQKTGAFYALVTGKQGEFEQYEIVDGGKGYVTGKKVREFKLNSQTEGLVADDEYGNLYIAEEDEAIWKFNAEPGGGSKGQVVDRATGDHLTADIEGLTIYYAPNGKGYLMASSQGNNSYAMYERQGKNRYVANFEITDGEKIDGTSDTDGIDVLGFGLGPKYPYGIFVAQDGENIDNGQAVNQNFKIVSWEQIAQHLGEMPDLHKQVNPRKLKDRSDG</sequence>
<keyword id="KW-0378">Hydrolase</keyword>
<keyword id="KW-1185">Reference proteome</keyword>
<keyword id="KW-0964">Secreted</keyword>
<keyword id="KW-0732">Signal</keyword>
<organism>
    <name type="scientific">Bacillus subtilis (strain 168)</name>
    <dbReference type="NCBI Taxonomy" id="224308"/>
    <lineage>
        <taxon>Bacteria</taxon>
        <taxon>Bacillati</taxon>
        <taxon>Bacillota</taxon>
        <taxon>Bacilli</taxon>
        <taxon>Bacillales</taxon>
        <taxon>Bacillaceae</taxon>
        <taxon>Bacillus</taxon>
    </lineage>
</organism>
<protein>
    <recommendedName>
        <fullName>3-phytase</fullName>
        <ecNumber>3.1.3.8</ecNumber>
    </recommendedName>
    <alternativeName>
        <fullName>Myo-inositol-hexaphosphate 3-phosphohydrolase</fullName>
    </alternativeName>
    <alternativeName>
        <fullName>Phytate 3-phosphatase</fullName>
    </alternativeName>
</protein>
<name>PHYT_BACSU</name>
<dbReference type="EC" id="3.1.3.8"/>
<dbReference type="EMBL" id="AF015775">
    <property type="protein sequence ID" value="AAB72078.1"/>
    <property type="molecule type" value="Genomic_DNA"/>
</dbReference>
<dbReference type="EMBL" id="AF006665">
    <property type="protein sequence ID" value="AAB81148.1"/>
    <property type="molecule type" value="Genomic_DNA"/>
</dbReference>
<dbReference type="EMBL" id="AL009126">
    <property type="protein sequence ID" value="CAB13871.1"/>
    <property type="molecule type" value="Genomic_DNA"/>
</dbReference>
<dbReference type="EMBL" id="U18421">
    <property type="protein sequence ID" value="AAA87722.1"/>
    <property type="molecule type" value="Genomic_DNA"/>
</dbReference>
<dbReference type="PIR" id="H69904">
    <property type="entry name" value="H69904"/>
</dbReference>
<dbReference type="RefSeq" id="WP_003230820.1">
    <property type="nucleotide sequence ID" value="NZ_OZ025638.1"/>
</dbReference>
<dbReference type="SMR" id="P42094"/>
<dbReference type="FunCoup" id="P42094">
    <property type="interactions" value="111"/>
</dbReference>
<dbReference type="STRING" id="224308.BSU19800"/>
<dbReference type="PaxDb" id="224308-BSU19800"/>
<dbReference type="EnsemblBacteria" id="CAB13871">
    <property type="protein sequence ID" value="CAB13871"/>
    <property type="gene ID" value="BSU_19800"/>
</dbReference>
<dbReference type="GeneID" id="940065"/>
<dbReference type="KEGG" id="bsu:BSU19800"/>
<dbReference type="PATRIC" id="fig|224308.179.peg.2169"/>
<dbReference type="eggNOG" id="COG4247">
    <property type="taxonomic scope" value="Bacteria"/>
</dbReference>
<dbReference type="InParanoid" id="P42094"/>
<dbReference type="OrthoDB" id="292013at2"/>
<dbReference type="PhylomeDB" id="P42094"/>
<dbReference type="BioCyc" id="BSUB:BSU19800-MONOMER"/>
<dbReference type="BRENDA" id="3.1.3.8">
    <property type="organism ID" value="658"/>
</dbReference>
<dbReference type="Proteomes" id="UP000001570">
    <property type="component" value="Chromosome"/>
</dbReference>
<dbReference type="GO" id="GO:0005576">
    <property type="term" value="C:extracellular region"/>
    <property type="evidence" value="ECO:0007669"/>
    <property type="project" value="UniProtKB-SubCell"/>
</dbReference>
<dbReference type="GO" id="GO:0016158">
    <property type="term" value="F:3-phytase activity"/>
    <property type="evidence" value="ECO:0007669"/>
    <property type="project" value="UniProtKB-EC"/>
</dbReference>
<dbReference type="Gene3D" id="2.120.10.30">
    <property type="entry name" value="TolB, C-terminal domain"/>
    <property type="match status" value="1"/>
</dbReference>
<dbReference type="InterPro" id="IPR011042">
    <property type="entry name" value="6-blade_b-propeller_TolB-like"/>
</dbReference>
<dbReference type="InterPro" id="IPR003431">
    <property type="entry name" value="BP_Phytase"/>
</dbReference>
<dbReference type="Pfam" id="PF02333">
    <property type="entry name" value="Phytase"/>
    <property type="match status" value="1"/>
</dbReference>
<dbReference type="SUPFAM" id="SSF50956">
    <property type="entry name" value="Thermostable phytase (3-phytase)"/>
    <property type="match status" value="1"/>
</dbReference>
<dbReference type="PROSITE" id="PS51662">
    <property type="entry name" value="BP_PHYTASE"/>
    <property type="match status" value="1"/>
</dbReference>
<evidence type="ECO:0000250" key="1"/>
<evidence type="ECO:0000255" key="2"/>
<evidence type="ECO:0000255" key="3">
    <source>
        <dbReference type="PROSITE-ProRule" id="PRU00997"/>
    </source>
</evidence>
<gene>
    <name type="primary">phy</name>
    <name type="synonym">yodV</name>
    <name type="synonym">yzxA</name>
    <name type="ordered locus">BSU19800</name>
</gene>